<sequence>MTIGRAKVYATLSKIFYHLFYDEAIPKDCREIIEKFGEIDFNLRSVLVRELRGSVLIKDMPQSLAEVYESVMKDFYERYGFQASELHADHIAVELAFMSKLVEREISLAQQMKEEELYKIRAAQHRFIKAHLQPLVKNLPSAPLLNFVRDFVREDAKYLYSSLVGEKNEGADNN</sequence>
<reference key="1">
    <citation type="journal article" date="1997" name="Nature">
        <title>The complete genome sequence of the hyperthermophilic, sulphate-reducing archaeon Archaeoglobus fulgidus.</title>
        <authorList>
            <person name="Klenk H.-P."/>
            <person name="Clayton R.A."/>
            <person name="Tomb J.-F."/>
            <person name="White O."/>
            <person name="Nelson K.E."/>
            <person name="Ketchum K.A."/>
            <person name="Dodson R.J."/>
            <person name="Gwinn M.L."/>
            <person name="Hickey E.K."/>
            <person name="Peterson J.D."/>
            <person name="Richardson D.L."/>
            <person name="Kerlavage A.R."/>
            <person name="Graham D.E."/>
            <person name="Kyrpides N.C."/>
            <person name="Fleischmann R.D."/>
            <person name="Quackenbush J."/>
            <person name="Lee N.H."/>
            <person name="Sutton G.G."/>
            <person name="Gill S.R."/>
            <person name="Kirkness E.F."/>
            <person name="Dougherty B.A."/>
            <person name="McKenney K."/>
            <person name="Adams M.D."/>
            <person name="Loftus B.J."/>
            <person name="Peterson S.N."/>
            <person name="Reich C.I."/>
            <person name="McNeil L.K."/>
            <person name="Badger J.H."/>
            <person name="Glodek A."/>
            <person name="Zhou L."/>
            <person name="Overbeek R."/>
            <person name="Gocayne J.D."/>
            <person name="Weidman J.F."/>
            <person name="McDonald L.A."/>
            <person name="Utterback T.R."/>
            <person name="Cotton M.D."/>
            <person name="Spriggs T."/>
            <person name="Artiach P."/>
            <person name="Kaine B.P."/>
            <person name="Sykes S.M."/>
            <person name="Sadow P.W."/>
            <person name="D'Andrea K.P."/>
            <person name="Bowman C."/>
            <person name="Fujii C."/>
            <person name="Garland S.A."/>
            <person name="Mason T.M."/>
            <person name="Olsen G.J."/>
            <person name="Fraser C.M."/>
            <person name="Smith H.O."/>
            <person name="Woese C.R."/>
            <person name="Venter J.C."/>
        </authorList>
    </citation>
    <scope>NUCLEOTIDE SEQUENCE [LARGE SCALE GENOMIC DNA]</scope>
    <source>
        <strain>ATCC 49558 / DSM 4304 / JCM 9628 / NBRC 100126 / VC-16</strain>
    </source>
</reference>
<reference key="2">
    <citation type="submission" date="2009-02" db="PDB data bank">
        <title>Crystal structure of hypothetical protein AF0160 from Archaeoglobus fulgidus at 2.69 angstrom resolution.</title>
        <authorList>
            <person name="Zhao M."/>
            <person name="Zhang M."/>
            <person name="Chang J."/>
            <person name="Chen L."/>
            <person name="Xu H."/>
            <person name="Li Y."/>
            <person name="Liu Z.J."/>
            <person name="Rose J.P."/>
            <person name="Wang B.C."/>
        </authorList>
    </citation>
    <scope>X-RAY CRYSTALLOGRAPHY (2.69 ANGSTROMS)</scope>
</reference>
<reference key="3">
    <citation type="journal article" date="2012" name="Biochemistry">
        <title>Conserved signal peptide recognition systems across the prokaryotic domains.</title>
        <authorList>
            <person name="Coulthurst S.J."/>
            <person name="Dawson A."/>
            <person name="Hunter W.N."/>
            <person name="Sargent F."/>
        </authorList>
    </citation>
    <scope>X-RAY CRYSTALLOGRAPHY (1.35 ANGSTROMS)</scope>
    <scope>FUNCTION</scope>
    <scope>SUBUNIT</scope>
    <scope>GENE NAME</scope>
    <source>
        <strain>ATCC 49558 / DSM 4304 / JCM 9628 / NBRC 100126 / VC-16</strain>
    </source>
</reference>
<gene>
    <name type="primary">ttrD</name>
    <name type="ordered locus">AF_0160</name>
</gene>
<accession>O30077</accession>
<name>TTRD_ARCFU</name>
<protein>
    <recommendedName>
        <fullName>Tat proofreading chaperone TtrD</fullName>
    </recommendedName>
</protein>
<organism>
    <name type="scientific">Archaeoglobus fulgidus (strain ATCC 49558 / DSM 4304 / JCM 9628 / NBRC 100126 / VC-16)</name>
    <dbReference type="NCBI Taxonomy" id="224325"/>
    <lineage>
        <taxon>Archaea</taxon>
        <taxon>Methanobacteriati</taxon>
        <taxon>Methanobacteriota</taxon>
        <taxon>Archaeoglobi</taxon>
        <taxon>Archaeoglobales</taxon>
        <taxon>Archaeoglobaceae</taxon>
        <taxon>Archaeoglobus</taxon>
    </lineage>
</organism>
<proteinExistence type="evidence at protein level"/>
<comment type="function">
    <text evidence="2">Binds specifically to the Tat signal peptide of the TtrA subunit of the tetrathionate reductase.</text>
</comment>
<comment type="subunit">
    <text evidence="2">Monomer.</text>
</comment>
<comment type="subcellular location">
    <subcellularLocation>
        <location evidence="1">Cytoplasm</location>
    </subcellularLocation>
</comment>
<comment type="similarity">
    <text evidence="3">Belongs to the TorD/DmsD family.</text>
</comment>
<evidence type="ECO:0000250" key="1"/>
<evidence type="ECO:0000269" key="2">
    <source>
    </source>
</evidence>
<evidence type="ECO:0000305" key="3"/>
<evidence type="ECO:0007829" key="4">
    <source>
        <dbReference type="PDB" id="2XOL"/>
    </source>
</evidence>
<feature type="chain" id="PRO_0000417421" description="Tat proofreading chaperone TtrD">
    <location>
        <begin position="1"/>
        <end position="174"/>
    </location>
</feature>
<feature type="helix" evidence="4">
    <location>
        <begin position="1"/>
        <end position="20"/>
    </location>
</feature>
<feature type="helix" evidence="4">
    <location>
        <begin position="27"/>
        <end position="34"/>
    </location>
</feature>
<feature type="helix" evidence="4">
    <location>
        <begin position="45"/>
        <end position="49"/>
    </location>
</feature>
<feature type="helix" evidence="4">
    <location>
        <begin position="53"/>
        <end position="56"/>
    </location>
</feature>
<feature type="helix" evidence="4">
    <location>
        <begin position="62"/>
        <end position="64"/>
    </location>
</feature>
<feature type="helix" evidence="4">
    <location>
        <begin position="65"/>
        <end position="78"/>
    </location>
</feature>
<feature type="helix" evidence="4">
    <location>
        <begin position="91"/>
        <end position="110"/>
    </location>
</feature>
<feature type="helix" evidence="4">
    <location>
        <begin position="114"/>
        <end position="130"/>
    </location>
</feature>
<feature type="helix" evidence="4">
    <location>
        <begin position="132"/>
        <end position="137"/>
    </location>
</feature>
<feature type="helix" evidence="4">
    <location>
        <begin position="143"/>
        <end position="164"/>
    </location>
</feature>
<keyword id="KW-0002">3D-structure</keyword>
<keyword id="KW-0143">Chaperone</keyword>
<keyword id="KW-0963">Cytoplasm</keyword>
<keyword id="KW-1185">Reference proteome</keyword>
<dbReference type="EMBL" id="AE000782">
    <property type="protein sequence ID" value="AAB91075.1"/>
    <property type="molecule type" value="Genomic_DNA"/>
</dbReference>
<dbReference type="PIR" id="H69269">
    <property type="entry name" value="H69269"/>
</dbReference>
<dbReference type="RefSeq" id="WP_010877672.1">
    <property type="nucleotide sequence ID" value="NC_000917.1"/>
</dbReference>
<dbReference type="PDB" id="2IDG">
    <property type="method" value="X-ray"/>
    <property type="resolution" value="2.69 A"/>
    <property type="chains" value="A/B/C=1-174"/>
</dbReference>
<dbReference type="PDB" id="2XOL">
    <property type="method" value="X-ray"/>
    <property type="resolution" value="1.35 A"/>
    <property type="chains" value="A/B=1-174"/>
</dbReference>
<dbReference type="PDB" id="2Y6Y">
    <property type="method" value="X-ray"/>
    <property type="resolution" value="2.20 A"/>
    <property type="chains" value="A=1-174"/>
</dbReference>
<dbReference type="PDB" id="2YJM">
    <property type="method" value="X-ray"/>
    <property type="resolution" value="1.84 A"/>
    <property type="chains" value="A=1-174"/>
</dbReference>
<dbReference type="PDBsum" id="2IDG"/>
<dbReference type="PDBsum" id="2XOL"/>
<dbReference type="PDBsum" id="2Y6Y"/>
<dbReference type="PDBsum" id="2YJM"/>
<dbReference type="SMR" id="O30077"/>
<dbReference type="STRING" id="224325.AF_0160"/>
<dbReference type="PaxDb" id="224325-AF_0160"/>
<dbReference type="EnsemblBacteria" id="AAB91075">
    <property type="protein sequence ID" value="AAB91075"/>
    <property type="gene ID" value="AF_0160"/>
</dbReference>
<dbReference type="KEGG" id="afu:AF_0160"/>
<dbReference type="eggNOG" id="arCOG01507">
    <property type="taxonomic scope" value="Archaea"/>
</dbReference>
<dbReference type="HOGENOM" id="CLU_1536568_0_0_2"/>
<dbReference type="EvolutionaryTrace" id="O30077"/>
<dbReference type="Proteomes" id="UP000002199">
    <property type="component" value="Chromosome"/>
</dbReference>
<dbReference type="GO" id="GO:0005737">
    <property type="term" value="C:cytoplasm"/>
    <property type="evidence" value="ECO:0007669"/>
    <property type="project" value="UniProtKB-SubCell"/>
</dbReference>
<dbReference type="Gene3D" id="1.10.3480.10">
    <property type="entry name" value="TorD-like"/>
    <property type="match status" value="1"/>
</dbReference>
<dbReference type="InterPro" id="IPR020945">
    <property type="entry name" value="DMSO/NO3_reduct_chaperone"/>
</dbReference>
<dbReference type="InterPro" id="IPR036411">
    <property type="entry name" value="TorD-like_sf"/>
</dbReference>
<dbReference type="Pfam" id="PF02613">
    <property type="entry name" value="Nitrate_red_del"/>
    <property type="match status" value="1"/>
</dbReference>
<dbReference type="SUPFAM" id="SSF89155">
    <property type="entry name" value="TorD-like"/>
    <property type="match status" value="1"/>
</dbReference>